<reference key="1">
    <citation type="submission" date="2007-04" db="EMBL/GenBank/DDBJ databases">
        <title>Complete sequence of plasmid pRSPA01 of Rhodobacter sphaeroides ATCC 17025.</title>
        <authorList>
            <consortium name="US DOE Joint Genome Institute"/>
            <person name="Copeland A."/>
            <person name="Lucas S."/>
            <person name="Lapidus A."/>
            <person name="Barry K."/>
            <person name="Detter J.C."/>
            <person name="Glavina del Rio T."/>
            <person name="Hammon N."/>
            <person name="Israni S."/>
            <person name="Dalin E."/>
            <person name="Tice H."/>
            <person name="Pitluck S."/>
            <person name="Chertkov O."/>
            <person name="Brettin T."/>
            <person name="Bruce D."/>
            <person name="Han C."/>
            <person name="Schmutz J."/>
            <person name="Larimer F."/>
            <person name="Land M."/>
            <person name="Hauser L."/>
            <person name="Kyrpides N."/>
            <person name="Kim E."/>
            <person name="Richardson P."/>
            <person name="Mackenzie C."/>
            <person name="Choudhary M."/>
            <person name="Donohue T.J."/>
            <person name="Kaplan S."/>
        </authorList>
    </citation>
    <scope>NUCLEOTIDE SEQUENCE [LARGE SCALE GENOMIC DNA]</scope>
    <source>
        <strain>ATCC 17025 / ATH 2.4.3</strain>
    </source>
</reference>
<comment type="function">
    <text evidence="1">Catalyzes the methylthiolation of N6-(dimethylallyl)adenosine (i(6)A), leading to the formation of 2-methylthio-N6-(dimethylallyl)adenosine (ms(2)i(6)A) at position 37 in tRNAs that read codons beginning with uridine.</text>
</comment>
<comment type="catalytic activity">
    <reaction evidence="1">
        <text>N(6)-dimethylallyladenosine(37) in tRNA + (sulfur carrier)-SH + AH2 + 2 S-adenosyl-L-methionine = 2-methylsulfanyl-N(6)-dimethylallyladenosine(37) in tRNA + (sulfur carrier)-H + 5'-deoxyadenosine + L-methionine + A + S-adenosyl-L-homocysteine + 2 H(+)</text>
        <dbReference type="Rhea" id="RHEA:37067"/>
        <dbReference type="Rhea" id="RHEA-COMP:10375"/>
        <dbReference type="Rhea" id="RHEA-COMP:10376"/>
        <dbReference type="Rhea" id="RHEA-COMP:14737"/>
        <dbReference type="Rhea" id="RHEA-COMP:14739"/>
        <dbReference type="ChEBI" id="CHEBI:13193"/>
        <dbReference type="ChEBI" id="CHEBI:15378"/>
        <dbReference type="ChEBI" id="CHEBI:17319"/>
        <dbReference type="ChEBI" id="CHEBI:17499"/>
        <dbReference type="ChEBI" id="CHEBI:29917"/>
        <dbReference type="ChEBI" id="CHEBI:57844"/>
        <dbReference type="ChEBI" id="CHEBI:57856"/>
        <dbReference type="ChEBI" id="CHEBI:59789"/>
        <dbReference type="ChEBI" id="CHEBI:64428"/>
        <dbReference type="ChEBI" id="CHEBI:74415"/>
        <dbReference type="ChEBI" id="CHEBI:74417"/>
        <dbReference type="EC" id="2.8.4.3"/>
    </reaction>
</comment>
<comment type="cofactor">
    <cofactor evidence="1">
        <name>[4Fe-4S] cluster</name>
        <dbReference type="ChEBI" id="CHEBI:49883"/>
    </cofactor>
    <text evidence="1">Binds 2 [4Fe-4S] clusters. One cluster is coordinated with 3 cysteines and an exchangeable S-adenosyl-L-methionine.</text>
</comment>
<comment type="subunit">
    <text evidence="1">Monomer.</text>
</comment>
<comment type="subcellular location">
    <subcellularLocation>
        <location evidence="1">Cytoplasm</location>
    </subcellularLocation>
</comment>
<comment type="similarity">
    <text evidence="1">Belongs to the methylthiotransferase family. MiaB subfamily.</text>
</comment>
<protein>
    <recommendedName>
        <fullName evidence="1">tRNA-2-methylthio-N(6)-dimethylallyladenosine synthase</fullName>
        <ecNumber evidence="1">2.8.4.3</ecNumber>
    </recommendedName>
    <alternativeName>
        <fullName evidence="1">(Dimethylallyl)adenosine tRNA methylthiotransferase MiaB</fullName>
    </alternativeName>
    <alternativeName>
        <fullName evidence="1">tRNA-i(6)A37 methylthiotransferase</fullName>
    </alternativeName>
</protein>
<sequence>MSESRKLFIKTYGCQMNVYDSERMAEALGAKGYVLTEVAEEADMVLLNTCHIREKAAEKVYSDLGRLRPLKVARPDLKIGVAGCVAQAEGEEILRRMPLVDLVVGPQSYHRLPDMLERTEGGARVIDTDFPEEDKFEHLPERKALRGPTAFLTVQEGCDKFCAFCVVPYTRGAEVSRPFARLMAEARALVEKGVREITLLGQNVNAWSNDGRGLGGLIRELARIDGLERLRYTTSHPNDMADDLIEAHGQEPKLMPYLHLPVQSGSDRILKAMNRKHAAEQYLRLVERIRAARPDILLTSDFIVGFPGETDADFEATLALIRAVGFGSAFSFKYSARPGTPAAEKPELPAELCDARLQTLQALLGEQQRAAQAAMVGRELGVLYEKAGRLPGQMVGKSDYLHAVHVEDPGARPGDLVRVRITASGPNSLAGERIGV</sequence>
<evidence type="ECO:0000255" key="1">
    <source>
        <dbReference type="HAMAP-Rule" id="MF_01864"/>
    </source>
</evidence>
<evidence type="ECO:0000255" key="2">
    <source>
        <dbReference type="PROSITE-ProRule" id="PRU01266"/>
    </source>
</evidence>
<dbReference type="EC" id="2.8.4.3" evidence="1"/>
<dbReference type="EMBL" id="CP000662">
    <property type="protein sequence ID" value="ABP72727.1"/>
    <property type="molecule type" value="Genomic_DNA"/>
</dbReference>
<dbReference type="SMR" id="A4WZB3"/>
<dbReference type="KEGG" id="rsq:Rsph17025_3872"/>
<dbReference type="HOGENOM" id="CLU_018697_2_0_5"/>
<dbReference type="BioCyc" id="RSPH349102:G1G8M-3994-MONOMER"/>
<dbReference type="GO" id="GO:0005829">
    <property type="term" value="C:cytosol"/>
    <property type="evidence" value="ECO:0007669"/>
    <property type="project" value="TreeGrafter"/>
</dbReference>
<dbReference type="GO" id="GO:0051539">
    <property type="term" value="F:4 iron, 4 sulfur cluster binding"/>
    <property type="evidence" value="ECO:0007669"/>
    <property type="project" value="UniProtKB-UniRule"/>
</dbReference>
<dbReference type="GO" id="GO:0046872">
    <property type="term" value="F:metal ion binding"/>
    <property type="evidence" value="ECO:0007669"/>
    <property type="project" value="UniProtKB-KW"/>
</dbReference>
<dbReference type="GO" id="GO:0035597">
    <property type="term" value="F:N6-isopentenyladenosine methylthiotransferase activity"/>
    <property type="evidence" value="ECO:0007669"/>
    <property type="project" value="TreeGrafter"/>
</dbReference>
<dbReference type="CDD" id="cd01335">
    <property type="entry name" value="Radical_SAM"/>
    <property type="match status" value="1"/>
</dbReference>
<dbReference type="FunFam" id="3.40.50.12160:FF:000001">
    <property type="entry name" value="tRNA-2-methylthio-N(6)-dimethylallyladenosine synthase"/>
    <property type="match status" value="1"/>
</dbReference>
<dbReference type="FunFam" id="3.80.30.20:FF:000001">
    <property type="entry name" value="tRNA-2-methylthio-N(6)-dimethylallyladenosine synthase 2"/>
    <property type="match status" value="1"/>
</dbReference>
<dbReference type="Gene3D" id="3.40.50.12160">
    <property type="entry name" value="Methylthiotransferase, N-terminal domain"/>
    <property type="match status" value="1"/>
</dbReference>
<dbReference type="Gene3D" id="3.80.30.20">
    <property type="entry name" value="tm_1862 like domain"/>
    <property type="match status" value="1"/>
</dbReference>
<dbReference type="HAMAP" id="MF_01864">
    <property type="entry name" value="tRNA_metthiotr_MiaB"/>
    <property type="match status" value="1"/>
</dbReference>
<dbReference type="InterPro" id="IPR006638">
    <property type="entry name" value="Elp3/MiaA/NifB-like_rSAM"/>
</dbReference>
<dbReference type="InterPro" id="IPR005839">
    <property type="entry name" value="Methylthiotransferase"/>
</dbReference>
<dbReference type="InterPro" id="IPR020612">
    <property type="entry name" value="Methylthiotransferase_CS"/>
</dbReference>
<dbReference type="InterPro" id="IPR013848">
    <property type="entry name" value="Methylthiotransferase_N"/>
</dbReference>
<dbReference type="InterPro" id="IPR038135">
    <property type="entry name" value="Methylthiotransferase_N_sf"/>
</dbReference>
<dbReference type="InterPro" id="IPR006463">
    <property type="entry name" value="MiaB_methiolase"/>
</dbReference>
<dbReference type="InterPro" id="IPR007197">
    <property type="entry name" value="rSAM"/>
</dbReference>
<dbReference type="InterPro" id="IPR023404">
    <property type="entry name" value="rSAM_horseshoe"/>
</dbReference>
<dbReference type="InterPro" id="IPR002792">
    <property type="entry name" value="TRAM_dom"/>
</dbReference>
<dbReference type="NCBIfam" id="TIGR01574">
    <property type="entry name" value="miaB-methiolase"/>
    <property type="match status" value="1"/>
</dbReference>
<dbReference type="NCBIfam" id="TIGR00089">
    <property type="entry name" value="MiaB/RimO family radical SAM methylthiotransferase"/>
    <property type="match status" value="1"/>
</dbReference>
<dbReference type="PANTHER" id="PTHR43020">
    <property type="entry name" value="CDK5 REGULATORY SUBUNIT-ASSOCIATED PROTEIN 1"/>
    <property type="match status" value="1"/>
</dbReference>
<dbReference type="PANTHER" id="PTHR43020:SF2">
    <property type="entry name" value="MITOCHONDRIAL TRNA METHYLTHIOTRANSFERASE CDK5RAP1"/>
    <property type="match status" value="1"/>
</dbReference>
<dbReference type="Pfam" id="PF04055">
    <property type="entry name" value="Radical_SAM"/>
    <property type="match status" value="1"/>
</dbReference>
<dbReference type="Pfam" id="PF01938">
    <property type="entry name" value="TRAM"/>
    <property type="match status" value="1"/>
</dbReference>
<dbReference type="Pfam" id="PF00919">
    <property type="entry name" value="UPF0004"/>
    <property type="match status" value="1"/>
</dbReference>
<dbReference type="SFLD" id="SFLDF00273">
    <property type="entry name" value="(dimethylallyl)adenosine_tRNA"/>
    <property type="match status" value="1"/>
</dbReference>
<dbReference type="SFLD" id="SFLDG01082">
    <property type="entry name" value="B12-binding_domain_containing"/>
    <property type="match status" value="1"/>
</dbReference>
<dbReference type="SFLD" id="SFLDS00029">
    <property type="entry name" value="Radical_SAM"/>
    <property type="match status" value="1"/>
</dbReference>
<dbReference type="SMART" id="SM00729">
    <property type="entry name" value="Elp3"/>
    <property type="match status" value="1"/>
</dbReference>
<dbReference type="SUPFAM" id="SSF102114">
    <property type="entry name" value="Radical SAM enzymes"/>
    <property type="match status" value="1"/>
</dbReference>
<dbReference type="PROSITE" id="PS51449">
    <property type="entry name" value="MTTASE_N"/>
    <property type="match status" value="1"/>
</dbReference>
<dbReference type="PROSITE" id="PS01278">
    <property type="entry name" value="MTTASE_RADICAL"/>
    <property type="match status" value="1"/>
</dbReference>
<dbReference type="PROSITE" id="PS51918">
    <property type="entry name" value="RADICAL_SAM"/>
    <property type="match status" value="1"/>
</dbReference>
<dbReference type="PROSITE" id="PS50926">
    <property type="entry name" value="TRAM"/>
    <property type="match status" value="1"/>
</dbReference>
<accession>A4WZB3</accession>
<feature type="chain" id="PRO_0000374488" description="tRNA-2-methylthio-N(6)-dimethylallyladenosine synthase">
    <location>
        <begin position="1"/>
        <end position="436"/>
    </location>
</feature>
<feature type="domain" description="MTTase N-terminal" evidence="1">
    <location>
        <begin position="5"/>
        <end position="121"/>
    </location>
</feature>
<feature type="domain" description="Radical SAM core" evidence="2">
    <location>
        <begin position="144"/>
        <end position="373"/>
    </location>
</feature>
<feature type="domain" description="TRAM" evidence="1">
    <location>
        <begin position="373"/>
        <end position="435"/>
    </location>
</feature>
<feature type="binding site" evidence="1">
    <location>
        <position position="14"/>
    </location>
    <ligand>
        <name>[4Fe-4S] cluster</name>
        <dbReference type="ChEBI" id="CHEBI:49883"/>
        <label>1</label>
    </ligand>
</feature>
<feature type="binding site" evidence="1">
    <location>
        <position position="50"/>
    </location>
    <ligand>
        <name>[4Fe-4S] cluster</name>
        <dbReference type="ChEBI" id="CHEBI:49883"/>
        <label>1</label>
    </ligand>
</feature>
<feature type="binding site" evidence="1">
    <location>
        <position position="84"/>
    </location>
    <ligand>
        <name>[4Fe-4S] cluster</name>
        <dbReference type="ChEBI" id="CHEBI:49883"/>
        <label>1</label>
    </ligand>
</feature>
<feature type="binding site" evidence="1">
    <location>
        <position position="158"/>
    </location>
    <ligand>
        <name>[4Fe-4S] cluster</name>
        <dbReference type="ChEBI" id="CHEBI:49883"/>
        <label>2</label>
        <note>4Fe-4S-S-AdoMet</note>
    </ligand>
</feature>
<feature type="binding site" evidence="1">
    <location>
        <position position="162"/>
    </location>
    <ligand>
        <name>[4Fe-4S] cluster</name>
        <dbReference type="ChEBI" id="CHEBI:49883"/>
        <label>2</label>
        <note>4Fe-4S-S-AdoMet</note>
    </ligand>
</feature>
<feature type="binding site" evidence="1">
    <location>
        <position position="165"/>
    </location>
    <ligand>
        <name>[4Fe-4S] cluster</name>
        <dbReference type="ChEBI" id="CHEBI:49883"/>
        <label>2</label>
        <note>4Fe-4S-S-AdoMet</note>
    </ligand>
</feature>
<geneLocation type="plasmid">
    <name>pRSPA01</name>
</geneLocation>
<organism>
    <name type="scientific">Cereibacter sphaeroides (strain ATCC 17025 / ATH 2.4.3)</name>
    <name type="common">Rhodobacter sphaeroides</name>
    <dbReference type="NCBI Taxonomy" id="349102"/>
    <lineage>
        <taxon>Bacteria</taxon>
        <taxon>Pseudomonadati</taxon>
        <taxon>Pseudomonadota</taxon>
        <taxon>Alphaproteobacteria</taxon>
        <taxon>Rhodobacterales</taxon>
        <taxon>Paracoccaceae</taxon>
        <taxon>Cereibacter</taxon>
    </lineage>
</organism>
<proteinExistence type="inferred from homology"/>
<gene>
    <name evidence="1" type="primary">miaB</name>
    <name type="ordered locus">Rsph17025_3872</name>
</gene>
<keyword id="KW-0004">4Fe-4S</keyword>
<keyword id="KW-0963">Cytoplasm</keyword>
<keyword id="KW-0408">Iron</keyword>
<keyword id="KW-0411">Iron-sulfur</keyword>
<keyword id="KW-0479">Metal-binding</keyword>
<keyword id="KW-0614">Plasmid</keyword>
<keyword id="KW-0949">S-adenosyl-L-methionine</keyword>
<keyword id="KW-0808">Transferase</keyword>
<keyword id="KW-0819">tRNA processing</keyword>
<name>MIAB_CERS5</name>